<proteinExistence type="inferred from homology"/>
<name>FCERG_PIG</name>
<comment type="function">
    <text evidence="3">Adapter protein containing an immunoreceptor tyrosine-based activation motif (ITAM) that transduces activation signals from various immunoreceptors. As a component of the high-affinity immunoglobulin E (IgE) receptor, mediates allergic inflammatory signaling in mast cells. As a constitutive component of interleukin-3 receptor complex, selectively mediates interleukin 4/IL4 production b basophils priming T-cells toward effector T-helper 2 subset. Associates with pattern recognition receptors CLEC4D and CLEC4E to form a functional signaling complex in myeloid cells. Binding of mycobacterial trehalose 6,6'-dimycolate (TDM) to this receptor complex leads to phosphorylation of ITAM, triggering activation of SYK, CARD9 and NF-kappa-B, consequently driving maturation of antigen-presenting cells and shaping antigen-specific priming of T-cells toward effector T-helper 1 and T-helper 17 cell subtypes. May function cooperatively with other activating receptors. Functionally linked to integrin beta-2/ITGB2-mediated neutrophil activation. Also involved in integrin alpha-2/ITGA2-mediated platelet activation.</text>
</comment>
<comment type="subunit">
    <text evidence="2 3 4">IgE Fc receptor is a tetramer of an alpha chain, a beta chain, and two disulfide linked gamma chains. Associates with FCGR1A; forms a functional signaling complex (By similarity). The signaling subunit of immunoglobulin gamma (IgG) Fc receptor complex. As a homodimer or a heterodimer of CD247 and FCER1G, associates with the ligand binding subunit FCGR3A to form a functional receptor complex (By similarity). Associates with CLEC6A. Interacts with CLEC4E. Interacts (via ITAM domain) with SYK (via SH2 domains); activates SYK, enabling integrin-mediated activation of neutrophils and macrophages (By similarity). Interacts with common beta chain of interleukin 3 receptor CSF2RB and recruits SYK in response to IL3 stimulation; this interaction is direct (By similarity). Interacts with CD300LH; the interaction may be indirect. Interacts with CD300LD (By similarity). Interacts with TARM1 (By similarity).</text>
</comment>
<comment type="subcellular location">
    <subcellularLocation>
        <location evidence="1">Cell membrane</location>
        <topology evidence="1">Single-pass type I membrane protein</topology>
    </subcellularLocation>
</comment>
<comment type="similarity">
    <text evidence="7">Belongs to the CD3Z/FCER1G family.</text>
</comment>
<evidence type="ECO:0000250" key="1"/>
<evidence type="ECO:0000250" key="2">
    <source>
        <dbReference type="UniProtKB" id="P20411"/>
    </source>
</evidence>
<evidence type="ECO:0000250" key="3">
    <source>
        <dbReference type="UniProtKB" id="P20491"/>
    </source>
</evidence>
<evidence type="ECO:0000250" key="4">
    <source>
        <dbReference type="UniProtKB" id="P30273"/>
    </source>
</evidence>
<evidence type="ECO:0000255" key="5"/>
<evidence type="ECO:0000255" key="6">
    <source>
        <dbReference type="PROSITE-ProRule" id="PRU00379"/>
    </source>
</evidence>
<evidence type="ECO:0000305" key="7"/>
<gene>
    <name type="primary">FCER1G</name>
</gene>
<dbReference type="EMBL" id="AF148221">
    <property type="protein sequence ID" value="AAD38022.1"/>
    <property type="molecule type" value="mRNA"/>
</dbReference>
<dbReference type="RefSeq" id="NP_001001265.1">
    <property type="nucleotide sequence ID" value="NM_001001265.1"/>
</dbReference>
<dbReference type="SMR" id="Q9XSZ6"/>
<dbReference type="FunCoup" id="Q9XSZ6">
    <property type="interactions" value="355"/>
</dbReference>
<dbReference type="PaxDb" id="9823-ENSSSCP00000006776"/>
<dbReference type="PeptideAtlas" id="Q9XSZ6"/>
<dbReference type="Ensembl" id="ENSSSCT00000033667.4">
    <property type="protein sequence ID" value="ENSSSCP00000030545.4"/>
    <property type="gene ID" value="ENSSSCG00000006357.6"/>
</dbReference>
<dbReference type="Ensembl" id="ENSSSCT00070052023.1">
    <property type="protein sequence ID" value="ENSSSCP00070044016.1"/>
    <property type="gene ID" value="ENSSSCG00070025990.1"/>
</dbReference>
<dbReference type="Ensembl" id="ENSSSCT00115017829">
    <property type="protein sequence ID" value="ENSSSCP00115016827"/>
    <property type="gene ID" value="ENSSSCG00115010368"/>
</dbReference>
<dbReference type="GeneID" id="397406"/>
<dbReference type="KEGG" id="ssc:397406"/>
<dbReference type="CTD" id="2207"/>
<dbReference type="VGNC" id="VGNC:88061">
    <property type="gene designation" value="FCER1G"/>
</dbReference>
<dbReference type="eggNOG" id="ENOG502S7XC">
    <property type="taxonomic scope" value="Eukaryota"/>
</dbReference>
<dbReference type="GeneTree" id="ENSGT00390000003894"/>
<dbReference type="HOGENOM" id="CLU_192374_0_0_1"/>
<dbReference type="InParanoid" id="Q9XSZ6"/>
<dbReference type="OMA" id="CRLKIQM"/>
<dbReference type="OrthoDB" id="9941225at2759"/>
<dbReference type="TreeFam" id="TF330937"/>
<dbReference type="Reactome" id="R-SSC-114604">
    <property type="pathway name" value="GPVI-mediated activation cascade"/>
</dbReference>
<dbReference type="Reactome" id="R-SSC-202733">
    <property type="pathway name" value="Cell surface interactions at the vascular wall"/>
</dbReference>
<dbReference type="Reactome" id="R-SSC-2454202">
    <property type="pathway name" value="Fc epsilon receptor (FCERI) signaling"/>
</dbReference>
<dbReference type="Reactome" id="R-SSC-2730905">
    <property type="pathway name" value="Role of LAT2/NTAL/LAB on calcium mobilization"/>
</dbReference>
<dbReference type="Reactome" id="R-SSC-2871796">
    <property type="pathway name" value="FCERI mediated MAPK activation"/>
</dbReference>
<dbReference type="Reactome" id="R-SSC-2871809">
    <property type="pathway name" value="FCERI mediated Ca+2 mobilization"/>
</dbReference>
<dbReference type="Reactome" id="R-SSC-2871837">
    <property type="pathway name" value="FCERI mediated NF-kB activation"/>
</dbReference>
<dbReference type="Reactome" id="R-SSC-5621480">
    <property type="pathway name" value="Dectin-2 family"/>
</dbReference>
<dbReference type="Reactome" id="R-SSC-6798695">
    <property type="pathway name" value="Neutrophil degranulation"/>
</dbReference>
<dbReference type="Reactome" id="R-SSC-75892">
    <property type="pathway name" value="Platelet Adhesion to exposed collagen"/>
</dbReference>
<dbReference type="Proteomes" id="UP000008227">
    <property type="component" value="Chromosome 4"/>
</dbReference>
<dbReference type="Proteomes" id="UP000314985">
    <property type="component" value="Chromosome 4"/>
</dbReference>
<dbReference type="Proteomes" id="UP000694570">
    <property type="component" value="Unplaced"/>
</dbReference>
<dbReference type="Proteomes" id="UP000694571">
    <property type="component" value="Unplaced"/>
</dbReference>
<dbReference type="Proteomes" id="UP000694720">
    <property type="component" value="Unplaced"/>
</dbReference>
<dbReference type="Proteomes" id="UP000694722">
    <property type="component" value="Unplaced"/>
</dbReference>
<dbReference type="Proteomes" id="UP000694723">
    <property type="component" value="Unplaced"/>
</dbReference>
<dbReference type="Proteomes" id="UP000694724">
    <property type="component" value="Unplaced"/>
</dbReference>
<dbReference type="Proteomes" id="UP000694725">
    <property type="component" value="Unplaced"/>
</dbReference>
<dbReference type="Proteomes" id="UP000694726">
    <property type="component" value="Unplaced"/>
</dbReference>
<dbReference type="Proteomes" id="UP000694727">
    <property type="component" value="Unplaced"/>
</dbReference>
<dbReference type="Proteomes" id="UP000694728">
    <property type="component" value="Unplaced"/>
</dbReference>
<dbReference type="GO" id="GO:0009897">
    <property type="term" value="C:external side of plasma membrane"/>
    <property type="evidence" value="ECO:0007669"/>
    <property type="project" value="Ensembl"/>
</dbReference>
<dbReference type="GO" id="GO:0032998">
    <property type="term" value="C:Fc-epsilon receptor I complex"/>
    <property type="evidence" value="ECO:0007669"/>
    <property type="project" value="Ensembl"/>
</dbReference>
<dbReference type="GO" id="GO:0033001">
    <property type="term" value="C:Fc-gamma receptor III complex"/>
    <property type="evidence" value="ECO:0007669"/>
    <property type="project" value="Ensembl"/>
</dbReference>
<dbReference type="GO" id="GO:0019863">
    <property type="term" value="F:IgE binding"/>
    <property type="evidence" value="ECO:0007669"/>
    <property type="project" value="UniProtKB-KW"/>
</dbReference>
<dbReference type="GO" id="GO:0019767">
    <property type="term" value="F:IgE receptor activity"/>
    <property type="evidence" value="ECO:0007669"/>
    <property type="project" value="Ensembl"/>
</dbReference>
<dbReference type="GO" id="GO:0019864">
    <property type="term" value="F:IgG binding"/>
    <property type="evidence" value="ECO:0007669"/>
    <property type="project" value="Ensembl"/>
</dbReference>
<dbReference type="GO" id="GO:0042803">
    <property type="term" value="F:protein homodimerization activity"/>
    <property type="evidence" value="ECO:0007669"/>
    <property type="project" value="Ensembl"/>
</dbReference>
<dbReference type="GO" id="GO:0042590">
    <property type="term" value="P:antigen processing and presentation of exogenous peptide antigen via MHC class I"/>
    <property type="evidence" value="ECO:0007669"/>
    <property type="project" value="Ensembl"/>
</dbReference>
<dbReference type="GO" id="GO:0019886">
    <property type="term" value="P:antigen processing and presentation of exogenous peptide antigen via MHC class II"/>
    <property type="evidence" value="ECO:0007669"/>
    <property type="project" value="Ensembl"/>
</dbReference>
<dbReference type="GO" id="GO:0071404">
    <property type="term" value="P:cellular response to low-density lipoprotein particle stimulus"/>
    <property type="evidence" value="ECO:0000250"/>
    <property type="project" value="UniProtKB"/>
</dbReference>
<dbReference type="GO" id="GO:0042742">
    <property type="term" value="P:defense response to bacterium"/>
    <property type="evidence" value="ECO:0007669"/>
    <property type="project" value="Ensembl"/>
</dbReference>
<dbReference type="GO" id="GO:0002431">
    <property type="term" value="P:Fc receptor mediated stimulatory signaling pathway"/>
    <property type="evidence" value="ECO:0007669"/>
    <property type="project" value="Ensembl"/>
</dbReference>
<dbReference type="GO" id="GO:0038094">
    <property type="term" value="P:Fc-gamma receptor signaling pathway"/>
    <property type="evidence" value="ECO:0007669"/>
    <property type="project" value="Ensembl"/>
</dbReference>
<dbReference type="GO" id="GO:0016064">
    <property type="term" value="P:immunoglobulin mediated immune response"/>
    <property type="evidence" value="ECO:0007669"/>
    <property type="project" value="Ensembl"/>
</dbReference>
<dbReference type="GO" id="GO:0045087">
    <property type="term" value="P:innate immune response"/>
    <property type="evidence" value="ECO:0007669"/>
    <property type="project" value="UniProtKB-KW"/>
</dbReference>
<dbReference type="GO" id="GO:0007229">
    <property type="term" value="P:integrin-mediated signaling pathway"/>
    <property type="evidence" value="ECO:0007669"/>
    <property type="project" value="Ensembl"/>
</dbReference>
<dbReference type="GO" id="GO:0038156">
    <property type="term" value="P:interleukin-3-mediated signaling pathway"/>
    <property type="evidence" value="ECO:0000250"/>
    <property type="project" value="UniProtKB"/>
</dbReference>
<dbReference type="GO" id="GO:0033024">
    <property type="term" value="P:mast cell apoptotic process"/>
    <property type="evidence" value="ECO:0007669"/>
    <property type="project" value="Ensembl"/>
</dbReference>
<dbReference type="GO" id="GO:0043303">
    <property type="term" value="P:mast cell degranulation"/>
    <property type="evidence" value="ECO:0007669"/>
    <property type="project" value="Ensembl"/>
</dbReference>
<dbReference type="GO" id="GO:0033026">
    <property type="term" value="P:negative regulation of mast cell apoptotic process"/>
    <property type="evidence" value="ECO:0007669"/>
    <property type="project" value="Ensembl"/>
</dbReference>
<dbReference type="GO" id="GO:0002283">
    <property type="term" value="P:neutrophil activation involved in immune response"/>
    <property type="evidence" value="ECO:0007669"/>
    <property type="project" value="Ensembl"/>
</dbReference>
<dbReference type="GO" id="GO:0030593">
    <property type="term" value="P:neutrophil chemotaxis"/>
    <property type="evidence" value="ECO:0007669"/>
    <property type="project" value="Ensembl"/>
</dbReference>
<dbReference type="GO" id="GO:0030316">
    <property type="term" value="P:osteoclast differentiation"/>
    <property type="evidence" value="ECO:0007669"/>
    <property type="project" value="Ensembl"/>
</dbReference>
<dbReference type="GO" id="GO:0006911">
    <property type="term" value="P:phagocytosis, engulfment"/>
    <property type="evidence" value="ECO:0007669"/>
    <property type="project" value="Ensembl"/>
</dbReference>
<dbReference type="GO" id="GO:0032733">
    <property type="term" value="P:positive regulation of interleukin-10 production"/>
    <property type="evidence" value="ECO:0007669"/>
    <property type="project" value="Ensembl"/>
</dbReference>
<dbReference type="GO" id="GO:0032753">
    <property type="term" value="P:positive regulation of interleukin-4 production"/>
    <property type="evidence" value="ECO:0000250"/>
    <property type="project" value="UniProtKB"/>
</dbReference>
<dbReference type="GO" id="GO:0032755">
    <property type="term" value="P:positive regulation of interleukin-6 production"/>
    <property type="evidence" value="ECO:0007669"/>
    <property type="project" value="Ensembl"/>
</dbReference>
<dbReference type="GO" id="GO:0032765">
    <property type="term" value="P:positive regulation of mast cell cytokine production"/>
    <property type="evidence" value="ECO:0007669"/>
    <property type="project" value="Ensembl"/>
</dbReference>
<dbReference type="GO" id="GO:0043306">
    <property type="term" value="P:positive regulation of mast cell degranulation"/>
    <property type="evidence" value="ECO:0007669"/>
    <property type="project" value="Ensembl"/>
</dbReference>
<dbReference type="GO" id="GO:0050766">
    <property type="term" value="P:positive regulation of phagocytosis"/>
    <property type="evidence" value="ECO:0007669"/>
    <property type="project" value="Ensembl"/>
</dbReference>
<dbReference type="GO" id="GO:2000010">
    <property type="term" value="P:positive regulation of protein localization to cell surface"/>
    <property type="evidence" value="ECO:0007669"/>
    <property type="project" value="Ensembl"/>
</dbReference>
<dbReference type="GO" id="GO:0032760">
    <property type="term" value="P:positive regulation of tumor necrosis factor production"/>
    <property type="evidence" value="ECO:0007669"/>
    <property type="project" value="Ensembl"/>
</dbReference>
<dbReference type="GO" id="GO:0001812">
    <property type="term" value="P:positive regulation of type I hypersensitivity"/>
    <property type="evidence" value="ECO:0007669"/>
    <property type="project" value="Ensembl"/>
</dbReference>
<dbReference type="GO" id="GO:0001798">
    <property type="term" value="P:positive regulation of type IIa hypersensitivity"/>
    <property type="evidence" value="ECO:0007669"/>
    <property type="project" value="Ensembl"/>
</dbReference>
<dbReference type="GO" id="GO:0001805">
    <property type="term" value="P:positive regulation of type III hypersensitivity"/>
    <property type="evidence" value="ECO:0007669"/>
    <property type="project" value="Ensembl"/>
</dbReference>
<dbReference type="GO" id="GO:0072659">
    <property type="term" value="P:protein localization to plasma membrane"/>
    <property type="evidence" value="ECO:0007669"/>
    <property type="project" value="Ensembl"/>
</dbReference>
<dbReference type="GO" id="GO:0031623">
    <property type="term" value="P:receptor internalization"/>
    <property type="evidence" value="ECO:0000250"/>
    <property type="project" value="UniProtKB"/>
</dbReference>
<dbReference type="GO" id="GO:0010543">
    <property type="term" value="P:regulation of platelet activation"/>
    <property type="evidence" value="ECO:0007669"/>
    <property type="project" value="Ensembl"/>
</dbReference>
<dbReference type="GO" id="GO:0002554">
    <property type="term" value="P:serotonin secretion by platelet"/>
    <property type="evidence" value="ECO:0007669"/>
    <property type="project" value="Ensembl"/>
</dbReference>
<dbReference type="GO" id="GO:0002292">
    <property type="term" value="P:T cell differentiation involved in immune response"/>
    <property type="evidence" value="ECO:0007669"/>
    <property type="project" value="Ensembl"/>
</dbReference>
<dbReference type="InterPro" id="IPR021663">
    <property type="entry name" value="CD3_zeta/IgE_Fc_rcpt_gamma"/>
</dbReference>
<dbReference type="InterPro" id="IPR042340">
    <property type="entry name" value="FCER1G"/>
</dbReference>
<dbReference type="InterPro" id="IPR003110">
    <property type="entry name" value="Phos_immunorcpt_sig_ITAM"/>
</dbReference>
<dbReference type="PANTHER" id="PTHR16803">
    <property type="entry name" value="HIGH AFFINITY IMMUNOGLOBULIN EPSILON RECEPTOR GAMMA-SUBUNIT"/>
    <property type="match status" value="1"/>
</dbReference>
<dbReference type="PANTHER" id="PTHR16803:SF0">
    <property type="entry name" value="HIGH AFFINITY IMMUNOGLOBULIN EPSILON RECEPTOR SUBUNIT GAMMA"/>
    <property type="match status" value="1"/>
</dbReference>
<dbReference type="Pfam" id="PF02189">
    <property type="entry name" value="ITAM"/>
    <property type="match status" value="1"/>
</dbReference>
<dbReference type="Pfam" id="PF11628">
    <property type="entry name" value="TCR_zetazeta"/>
    <property type="match status" value="1"/>
</dbReference>
<dbReference type="SMART" id="SM00077">
    <property type="entry name" value="ITAM"/>
    <property type="match status" value="1"/>
</dbReference>
<dbReference type="PROSITE" id="PS51055">
    <property type="entry name" value="ITAM_1"/>
    <property type="match status" value="1"/>
</dbReference>
<organism>
    <name type="scientific">Sus scrofa</name>
    <name type="common">Pig</name>
    <dbReference type="NCBI Taxonomy" id="9823"/>
    <lineage>
        <taxon>Eukaryota</taxon>
        <taxon>Metazoa</taxon>
        <taxon>Chordata</taxon>
        <taxon>Craniata</taxon>
        <taxon>Vertebrata</taxon>
        <taxon>Euteleostomi</taxon>
        <taxon>Mammalia</taxon>
        <taxon>Eutheria</taxon>
        <taxon>Laurasiatheria</taxon>
        <taxon>Artiodactyla</taxon>
        <taxon>Suina</taxon>
        <taxon>Suidae</taxon>
        <taxon>Sus</taxon>
    </lineage>
</organism>
<feature type="signal peptide" evidence="5">
    <location>
        <begin position="1"/>
        <end position="18"/>
    </location>
</feature>
<feature type="chain" id="PRO_0000016504" description="High affinity immunoglobulin epsilon receptor subunit gamma">
    <location>
        <begin position="19"/>
        <end position="86"/>
    </location>
</feature>
<feature type="topological domain" description="Extracellular" evidence="5">
    <location>
        <begin position="19"/>
        <end position="23"/>
    </location>
</feature>
<feature type="transmembrane region" description="Helical" evidence="5">
    <location>
        <begin position="24"/>
        <end position="44"/>
    </location>
</feature>
<feature type="topological domain" description="Cytoplasmic" evidence="5">
    <location>
        <begin position="45"/>
        <end position="86"/>
    </location>
</feature>
<feature type="domain" description="ITAM" evidence="6">
    <location>
        <begin position="54"/>
        <end position="82"/>
    </location>
</feature>
<feature type="modified residue" description="Phosphotyrosine" evidence="3 6">
    <location>
        <position position="65"/>
    </location>
</feature>
<feature type="modified residue" description="Phosphoserine" evidence="4">
    <location>
        <position position="69"/>
    </location>
</feature>
<feature type="modified residue" description="Phosphotyrosine" evidence="3 6">
    <location>
        <position position="76"/>
    </location>
</feature>
<feature type="modified residue" description="Phosphothreonine" evidence="3">
    <location>
        <position position="78"/>
    </location>
</feature>
<feature type="disulfide bond" description="Interchain" evidence="1">
    <location>
        <position position="25"/>
    </location>
</feature>
<protein>
    <recommendedName>
        <fullName>High affinity immunoglobulin epsilon receptor subunit gamma</fullName>
    </recommendedName>
    <alternativeName>
        <fullName>Fc receptor gamma-chain</fullName>
        <shortName>FcRgamma</shortName>
    </alternativeName>
    <alternativeName>
        <fullName>Fc-epsilon RI-gamma</fullName>
    </alternativeName>
    <alternativeName>
        <fullName>IgE Fc receptor subunit gamma</fullName>
        <shortName>FceRI gamma</shortName>
    </alternativeName>
</protein>
<reference key="1">
    <citation type="submission" date="1999-05" db="EMBL/GenBank/DDBJ databases">
        <title>Molecular cloning of porcine Fc epsilon receptor gamma chain.</title>
        <authorList>
            <person name="Yim D."/>
            <person name="Kim Y.B."/>
        </authorList>
    </citation>
    <scope>NUCLEOTIDE SEQUENCE [MRNA]</scope>
    <source>
        <strain>Minnesota miniature</strain>
    </source>
</reference>
<sequence length="86" mass="9681">MIPAVVLLLLLLVEQAAALGEPQLCYILDAILFLYGIVLTLLYCRLKLQVRKAAIDSYEKSDGVYTGLSTRNQETYETLKHEKPPQ</sequence>
<keyword id="KW-1003">Cell membrane</keyword>
<keyword id="KW-1015">Disulfide bond</keyword>
<keyword id="KW-0389">IgE-binding protein</keyword>
<keyword id="KW-0391">Immunity</keyword>
<keyword id="KW-0399">Innate immunity</keyword>
<keyword id="KW-0472">Membrane</keyword>
<keyword id="KW-0597">Phosphoprotein</keyword>
<keyword id="KW-0675">Receptor</keyword>
<keyword id="KW-1185">Reference proteome</keyword>
<keyword id="KW-0732">Signal</keyword>
<keyword id="KW-0812">Transmembrane</keyword>
<keyword id="KW-1133">Transmembrane helix</keyword>
<accession>Q9XSZ6</accession>